<sequence length="255" mass="28146">MTQTSSLWVGVISLFPDMFDAITDQGVTGRAVKSGLIDFNCWNPRDYALDKHRTVDDRPYGGGPGMLMMVEPLKKAIAEAKKAAGDGAKVIYMSPQGRKLDQQGASELASSKKLILIAGRYEGIDERIIESYVDEEWSIGDFILSGGELPAMTLIDAVARLVPGVLGHNQSAEQDSFSDGLLDCPHYTRPETLDDKQVPAVLLSGNHQEIAKWRLMQSLGRTWLRRPDLLHNLALTEEQAVLLAKFQQEYQKACG</sequence>
<comment type="function">
    <text evidence="1">Specifically methylates guanosine-37 in various tRNAs.</text>
</comment>
<comment type="catalytic activity">
    <reaction evidence="1">
        <text>guanosine(37) in tRNA + S-adenosyl-L-methionine = N(1)-methylguanosine(37) in tRNA + S-adenosyl-L-homocysteine + H(+)</text>
        <dbReference type="Rhea" id="RHEA:36899"/>
        <dbReference type="Rhea" id="RHEA-COMP:10145"/>
        <dbReference type="Rhea" id="RHEA-COMP:10147"/>
        <dbReference type="ChEBI" id="CHEBI:15378"/>
        <dbReference type="ChEBI" id="CHEBI:57856"/>
        <dbReference type="ChEBI" id="CHEBI:59789"/>
        <dbReference type="ChEBI" id="CHEBI:73542"/>
        <dbReference type="ChEBI" id="CHEBI:74269"/>
        <dbReference type="EC" id="2.1.1.228"/>
    </reaction>
</comment>
<comment type="subunit">
    <text evidence="1">Homodimer.</text>
</comment>
<comment type="subcellular location">
    <subcellularLocation>
        <location evidence="1">Cytoplasm</location>
    </subcellularLocation>
</comment>
<comment type="similarity">
    <text evidence="1">Belongs to the RNA methyltransferase TrmD family.</text>
</comment>
<dbReference type="EC" id="2.1.1.228" evidence="1"/>
<dbReference type="EMBL" id="CR954246">
    <property type="protein sequence ID" value="CAI86024.1"/>
    <property type="molecule type" value="Genomic_DNA"/>
</dbReference>
<dbReference type="SMR" id="Q3IEC7"/>
<dbReference type="STRING" id="326442.PSHAa0946"/>
<dbReference type="KEGG" id="pha:PSHAa0946"/>
<dbReference type="eggNOG" id="COG0336">
    <property type="taxonomic scope" value="Bacteria"/>
</dbReference>
<dbReference type="HOGENOM" id="CLU_047363_0_1_6"/>
<dbReference type="BioCyc" id="PHAL326442:PSHA_RS04610-MONOMER"/>
<dbReference type="Proteomes" id="UP000006843">
    <property type="component" value="Chromosome I"/>
</dbReference>
<dbReference type="GO" id="GO:0005829">
    <property type="term" value="C:cytosol"/>
    <property type="evidence" value="ECO:0007669"/>
    <property type="project" value="TreeGrafter"/>
</dbReference>
<dbReference type="GO" id="GO:0052906">
    <property type="term" value="F:tRNA (guanine(37)-N1)-methyltransferase activity"/>
    <property type="evidence" value="ECO:0007669"/>
    <property type="project" value="UniProtKB-UniRule"/>
</dbReference>
<dbReference type="GO" id="GO:0002939">
    <property type="term" value="P:tRNA N1-guanine methylation"/>
    <property type="evidence" value="ECO:0007669"/>
    <property type="project" value="TreeGrafter"/>
</dbReference>
<dbReference type="CDD" id="cd18080">
    <property type="entry name" value="TrmD-like"/>
    <property type="match status" value="1"/>
</dbReference>
<dbReference type="FunFam" id="1.10.1270.20:FF:000001">
    <property type="entry name" value="tRNA (guanine-N(1)-)-methyltransferase"/>
    <property type="match status" value="1"/>
</dbReference>
<dbReference type="FunFam" id="3.40.1280.10:FF:000001">
    <property type="entry name" value="tRNA (guanine-N(1)-)-methyltransferase"/>
    <property type="match status" value="1"/>
</dbReference>
<dbReference type="Gene3D" id="3.40.1280.10">
    <property type="match status" value="1"/>
</dbReference>
<dbReference type="Gene3D" id="1.10.1270.20">
    <property type="entry name" value="tRNA(m1g37)methyltransferase, domain 2"/>
    <property type="match status" value="1"/>
</dbReference>
<dbReference type="HAMAP" id="MF_00605">
    <property type="entry name" value="TrmD"/>
    <property type="match status" value="1"/>
</dbReference>
<dbReference type="InterPro" id="IPR029028">
    <property type="entry name" value="Alpha/beta_knot_MTases"/>
</dbReference>
<dbReference type="InterPro" id="IPR023148">
    <property type="entry name" value="tRNA_m1G_MeTrfase_C_sf"/>
</dbReference>
<dbReference type="InterPro" id="IPR002649">
    <property type="entry name" value="tRNA_m1G_MeTrfase_TrmD"/>
</dbReference>
<dbReference type="InterPro" id="IPR029026">
    <property type="entry name" value="tRNA_m1G_MTases_N"/>
</dbReference>
<dbReference type="InterPro" id="IPR016009">
    <property type="entry name" value="tRNA_MeTrfase_TRMD/TRM10"/>
</dbReference>
<dbReference type="NCBIfam" id="NF000648">
    <property type="entry name" value="PRK00026.1"/>
    <property type="match status" value="1"/>
</dbReference>
<dbReference type="NCBIfam" id="TIGR00088">
    <property type="entry name" value="trmD"/>
    <property type="match status" value="1"/>
</dbReference>
<dbReference type="PANTHER" id="PTHR46417">
    <property type="entry name" value="TRNA (GUANINE-N(1)-)-METHYLTRANSFERASE"/>
    <property type="match status" value="1"/>
</dbReference>
<dbReference type="PANTHER" id="PTHR46417:SF1">
    <property type="entry name" value="TRNA (GUANINE-N(1)-)-METHYLTRANSFERASE"/>
    <property type="match status" value="1"/>
</dbReference>
<dbReference type="Pfam" id="PF01746">
    <property type="entry name" value="tRNA_m1G_MT"/>
    <property type="match status" value="1"/>
</dbReference>
<dbReference type="PIRSF" id="PIRSF000386">
    <property type="entry name" value="tRNA_mtase"/>
    <property type="match status" value="1"/>
</dbReference>
<dbReference type="SUPFAM" id="SSF75217">
    <property type="entry name" value="alpha/beta knot"/>
    <property type="match status" value="1"/>
</dbReference>
<accession>Q3IEC7</accession>
<gene>
    <name evidence="1" type="primary">trmD</name>
    <name type="ordered locus">PSHAa0946</name>
</gene>
<evidence type="ECO:0000255" key="1">
    <source>
        <dbReference type="HAMAP-Rule" id="MF_00605"/>
    </source>
</evidence>
<name>TRMD_PSET1</name>
<feature type="chain" id="PRO_0000257448" description="tRNA (guanine-N(1)-)-methyltransferase">
    <location>
        <begin position="1"/>
        <end position="255"/>
    </location>
</feature>
<feature type="binding site" evidence="1">
    <location>
        <position position="119"/>
    </location>
    <ligand>
        <name>S-adenosyl-L-methionine</name>
        <dbReference type="ChEBI" id="CHEBI:59789"/>
    </ligand>
</feature>
<feature type="binding site" evidence="1">
    <location>
        <begin position="139"/>
        <end position="144"/>
    </location>
    <ligand>
        <name>S-adenosyl-L-methionine</name>
        <dbReference type="ChEBI" id="CHEBI:59789"/>
    </ligand>
</feature>
<protein>
    <recommendedName>
        <fullName evidence="1">tRNA (guanine-N(1)-)-methyltransferase</fullName>
        <ecNumber evidence="1">2.1.1.228</ecNumber>
    </recommendedName>
    <alternativeName>
        <fullName evidence="1">M1G-methyltransferase</fullName>
    </alternativeName>
    <alternativeName>
        <fullName evidence="1">tRNA [GM37] methyltransferase</fullName>
    </alternativeName>
</protein>
<organism>
    <name type="scientific">Pseudoalteromonas translucida (strain TAC 125)</name>
    <dbReference type="NCBI Taxonomy" id="326442"/>
    <lineage>
        <taxon>Bacteria</taxon>
        <taxon>Pseudomonadati</taxon>
        <taxon>Pseudomonadota</taxon>
        <taxon>Gammaproteobacteria</taxon>
        <taxon>Alteromonadales</taxon>
        <taxon>Pseudoalteromonadaceae</taxon>
        <taxon>Pseudoalteromonas</taxon>
    </lineage>
</organism>
<keyword id="KW-0963">Cytoplasm</keyword>
<keyword id="KW-0489">Methyltransferase</keyword>
<keyword id="KW-1185">Reference proteome</keyword>
<keyword id="KW-0949">S-adenosyl-L-methionine</keyword>
<keyword id="KW-0808">Transferase</keyword>
<keyword id="KW-0819">tRNA processing</keyword>
<reference key="1">
    <citation type="journal article" date="2005" name="Genome Res.">
        <title>Coping with cold: the genome of the versatile marine Antarctica bacterium Pseudoalteromonas haloplanktis TAC125.</title>
        <authorList>
            <person name="Medigue C."/>
            <person name="Krin E."/>
            <person name="Pascal G."/>
            <person name="Barbe V."/>
            <person name="Bernsel A."/>
            <person name="Bertin P.N."/>
            <person name="Cheung F."/>
            <person name="Cruveiller S."/>
            <person name="D'Amico S."/>
            <person name="Duilio A."/>
            <person name="Fang G."/>
            <person name="Feller G."/>
            <person name="Ho C."/>
            <person name="Mangenot S."/>
            <person name="Marino G."/>
            <person name="Nilsson J."/>
            <person name="Parrilli E."/>
            <person name="Rocha E.P.C."/>
            <person name="Rouy Z."/>
            <person name="Sekowska A."/>
            <person name="Tutino M.L."/>
            <person name="Vallenet D."/>
            <person name="von Heijne G."/>
            <person name="Danchin A."/>
        </authorList>
    </citation>
    <scope>NUCLEOTIDE SEQUENCE [LARGE SCALE GENOMIC DNA]</scope>
    <source>
        <strain>TAC 125</strain>
    </source>
</reference>
<proteinExistence type="inferred from homology"/>